<keyword id="KW-0002">3D-structure</keyword>
<keyword id="KW-0333">Golgi apparatus</keyword>
<keyword id="KW-0342">GTP-binding</keyword>
<keyword id="KW-0449">Lipoprotein</keyword>
<keyword id="KW-0472">Membrane</keyword>
<keyword id="KW-0488">Methylation</keyword>
<keyword id="KW-0547">Nucleotide-binding</keyword>
<keyword id="KW-0636">Prenylation</keyword>
<keyword id="KW-1267">Proteomics identification</keyword>
<keyword id="KW-1185">Reference proteome</keyword>
<proteinExistence type="evidence at protein level"/>
<organism>
    <name type="scientific">Homo sapiens</name>
    <name type="common">Human</name>
    <dbReference type="NCBI Taxonomy" id="9606"/>
    <lineage>
        <taxon>Eukaryota</taxon>
        <taxon>Metazoa</taxon>
        <taxon>Chordata</taxon>
        <taxon>Craniata</taxon>
        <taxon>Vertebrata</taxon>
        <taxon>Euteleostomi</taxon>
        <taxon>Mammalia</taxon>
        <taxon>Eutheria</taxon>
        <taxon>Euarchontoglires</taxon>
        <taxon>Primates</taxon>
        <taxon>Haplorrhini</taxon>
        <taxon>Catarrhini</taxon>
        <taxon>Hominidae</taxon>
        <taxon>Homo</taxon>
    </lineage>
</organism>
<comment type="function">
    <text>Binds GTP but lacks intrinsic GTPase activity and is resistant to Rho-specific GTPase-activating proteins.</text>
</comment>
<comment type="subunit">
    <text evidence="1 3 4">Binds ROCK1 (By similarity). Interacts with UBXD5.</text>
</comment>
<comment type="interaction">
    <interactant intactId="EBI-1111534">
        <id>P61587</id>
    </interactant>
    <interactant intactId="EBI-725606">
        <id>Q9NWQ9</id>
        <label>C14orf119</label>
    </interactant>
    <organismsDiffer>false</organismsDiffer>
    <experiments>3</experiments>
</comment>
<comment type="interaction">
    <interactant intactId="EBI-1111534">
        <id>P61587</id>
    </interactant>
    <interactant intactId="EBI-750332">
        <id>Q9BU20</id>
        <label>CPLANE2</label>
    </interactant>
    <organismsDiffer>false</organismsDiffer>
    <experiments>3</experiments>
</comment>
<comment type="interaction">
    <interactant intactId="EBI-1111534">
        <id>P61587</id>
    </interactant>
    <interactant intactId="EBI-11980215">
        <id>O94827-4</id>
        <label>PLEKHG5</label>
    </interactant>
    <organismsDiffer>false</organismsDiffer>
    <experiments>3</experiments>
</comment>
<comment type="interaction">
    <interactant intactId="EBI-1111534">
        <id>P61587</id>
    </interactant>
    <interactant intactId="EBI-1111488">
        <id>O43157</id>
        <label>PLXNB1</label>
    </interactant>
    <organismsDiffer>false</organismsDiffer>
    <experiments>3</experiments>
</comment>
<comment type="interaction">
    <interactant intactId="EBI-1111534">
        <id>P61587</id>
    </interactant>
    <interactant intactId="EBI-722004">
        <id>O15031</id>
        <label>PLXNB2</label>
    </interactant>
    <organismsDiffer>false</organismsDiffer>
    <experiments>2</experiments>
</comment>
<comment type="interaction">
    <interactant intactId="EBI-1111534">
        <id>P61587</id>
    </interactant>
    <interactant intactId="EBI-359815">
        <id>P31946</id>
        <label>YWHAB</label>
    </interactant>
    <organismsDiffer>false</organismsDiffer>
    <experiments>3</experiments>
</comment>
<comment type="interaction">
    <interactant intactId="EBI-1111534">
        <id>P61587</id>
    </interactant>
    <interactant intactId="EBI-347088">
        <id>P63104</id>
        <label>YWHAZ</label>
    </interactant>
    <organismsDiffer>false</organismsDiffer>
    <experiments>11</experiments>
</comment>
<comment type="subcellular location">
    <subcellularLocation>
        <location>Golgi apparatus membrane</location>
        <topology>Peripheral membrane protein</topology>
    </subcellularLocation>
</comment>
<comment type="tissue specificity">
    <text>Ubiquitous.</text>
</comment>
<comment type="similarity">
    <text evidence="6">Belongs to the small GTPase superfamily. Rho family.</text>
</comment>
<comment type="online information" name="Atlas of Genetics and Cytogenetics in Oncology and Haematology">
    <link uri="https://atlasgeneticsoncology.org/gene/46247/RND3"/>
</comment>
<sequence>MKERRASQKLSSKSIMDPNQNVKCKIVVVGDSQCGKTALLHVFAKDCFPENYVPTVFENYTASFEIDTQRIELSLWDTSGSPYYDNVRPLSYPDSDAVLICFDISRPETLDSVLKKWKGEIQEFCPNTKMLLVGCKSDLRTDVSTLVELSNHRQTPVSYDQGANMAKQIGAATYIECSALQSENSVRDIFHVATLACVNKTNKNVKRNKSQRATKRISHMPSRPELSAVATDLRKDKAKSCTVM</sequence>
<name>RND3_HUMAN</name>
<protein>
    <recommendedName>
        <fullName>Rho-related GTP-binding protein RhoE</fullName>
    </recommendedName>
    <alternativeName>
        <fullName>Protein MemB</fullName>
    </alternativeName>
    <alternativeName>
        <fullName>Rho family GTPase 3</fullName>
    </alternativeName>
    <alternativeName>
        <fullName>Rho-related GTP-binding protein Rho8</fullName>
    </alternativeName>
    <alternativeName>
        <fullName>Rnd3</fullName>
    </alternativeName>
</protein>
<gene>
    <name type="primary">RND3</name>
    <name type="synonym">ARHE</name>
    <name type="synonym">RHO8</name>
    <name type="synonym">RHOE</name>
</gene>
<dbReference type="EMBL" id="X95282">
    <property type="protein sequence ID" value="CAA64603.1"/>
    <property type="molecule type" value="mRNA"/>
</dbReference>
<dbReference type="EMBL" id="X97758">
    <property type="protein sequence ID" value="CAA66352.1"/>
    <property type="molecule type" value="mRNA"/>
</dbReference>
<dbReference type="EMBL" id="AF498969">
    <property type="protein sequence ID" value="AAM21116.1"/>
    <property type="molecule type" value="mRNA"/>
</dbReference>
<dbReference type="EMBL" id="BT006769">
    <property type="protein sequence ID" value="AAP35415.1"/>
    <property type="molecule type" value="mRNA"/>
</dbReference>
<dbReference type="EMBL" id="CH471058">
    <property type="protein sequence ID" value="EAX11524.1"/>
    <property type="molecule type" value="Genomic_DNA"/>
</dbReference>
<dbReference type="EMBL" id="CH471058">
    <property type="protein sequence ID" value="EAX11526.1"/>
    <property type="molecule type" value="Genomic_DNA"/>
</dbReference>
<dbReference type="EMBL" id="BC012513">
    <property type="protein sequence ID" value="AAH12513.1"/>
    <property type="molecule type" value="mRNA"/>
</dbReference>
<dbReference type="EMBL" id="S82240">
    <property type="protein sequence ID" value="AAB47133.1"/>
    <property type="molecule type" value="mRNA"/>
</dbReference>
<dbReference type="CCDS" id="CCDS2190.1"/>
<dbReference type="RefSeq" id="NP_001241667.1">
    <property type="nucleotide sequence ID" value="NM_001254738.1"/>
</dbReference>
<dbReference type="RefSeq" id="NP_005159.1">
    <property type="nucleotide sequence ID" value="NM_005168.5"/>
</dbReference>
<dbReference type="PDB" id="1M7B">
    <property type="method" value="X-ray"/>
    <property type="resolution" value="2.00 A"/>
    <property type="chains" value="A=19-200"/>
</dbReference>
<dbReference type="PDB" id="2V55">
    <property type="method" value="X-ray"/>
    <property type="resolution" value="3.70 A"/>
    <property type="chains" value="B/D=1-200"/>
</dbReference>
<dbReference type="PDB" id="4BG6">
    <property type="method" value="X-ray"/>
    <property type="resolution" value="2.30 A"/>
    <property type="chains" value="Q/R=232-241"/>
</dbReference>
<dbReference type="PDB" id="7OBC">
    <property type="method" value="X-ray"/>
    <property type="resolution" value="1.90 A"/>
    <property type="chains" value="B=231-241"/>
</dbReference>
<dbReference type="PDB" id="7OBD">
    <property type="method" value="X-ray"/>
    <property type="resolution" value="2.00 A"/>
    <property type="chains" value="B=231-241"/>
</dbReference>
<dbReference type="PDB" id="8B2K">
    <property type="method" value="X-ray"/>
    <property type="resolution" value="1.40 A"/>
    <property type="chains" value="B=231-244"/>
</dbReference>
<dbReference type="PDB" id="8BFC">
    <property type="method" value="X-ray"/>
    <property type="resolution" value="1.40 A"/>
    <property type="chains" value="B=231-244"/>
</dbReference>
<dbReference type="PDBsum" id="1M7B"/>
<dbReference type="PDBsum" id="2V55"/>
<dbReference type="PDBsum" id="4BG6"/>
<dbReference type="PDBsum" id="7OBC"/>
<dbReference type="PDBsum" id="7OBD"/>
<dbReference type="PDBsum" id="8B2K"/>
<dbReference type="PDBsum" id="8BFC"/>
<dbReference type="SMR" id="P61587"/>
<dbReference type="BioGRID" id="106883">
    <property type="interactions" value="270"/>
</dbReference>
<dbReference type="FunCoup" id="P61587">
    <property type="interactions" value="877"/>
</dbReference>
<dbReference type="IntAct" id="P61587">
    <property type="interactions" value="13"/>
</dbReference>
<dbReference type="MINT" id="P61587"/>
<dbReference type="STRING" id="9606.ENSP00000364886"/>
<dbReference type="DrugBank" id="DB04137">
    <property type="generic name" value="Guanosine-5'-Triphosphate"/>
</dbReference>
<dbReference type="iPTMnet" id="P61587"/>
<dbReference type="PhosphoSitePlus" id="P61587"/>
<dbReference type="BioMuta" id="RND3"/>
<dbReference type="DMDM" id="47606459"/>
<dbReference type="jPOST" id="P61587"/>
<dbReference type="MassIVE" id="P61587"/>
<dbReference type="PaxDb" id="9606-ENSP00000364886"/>
<dbReference type="PeptideAtlas" id="P61587"/>
<dbReference type="ProteomicsDB" id="57322"/>
<dbReference type="Pumba" id="P61587"/>
<dbReference type="Antibodypedia" id="33646">
    <property type="antibodies" value="223 antibodies from 33 providers"/>
</dbReference>
<dbReference type="DNASU" id="390"/>
<dbReference type="Ensembl" id="ENST00000263895.9">
    <property type="protein sequence ID" value="ENSP00000263895.4"/>
    <property type="gene ID" value="ENSG00000115963.14"/>
</dbReference>
<dbReference type="Ensembl" id="ENST00000375734.6">
    <property type="protein sequence ID" value="ENSP00000364886.2"/>
    <property type="gene ID" value="ENSG00000115963.14"/>
</dbReference>
<dbReference type="GeneID" id="390"/>
<dbReference type="KEGG" id="hsa:390"/>
<dbReference type="MANE-Select" id="ENST00000263895.9">
    <property type="protein sequence ID" value="ENSP00000263895.4"/>
    <property type="RefSeq nucleotide sequence ID" value="NM_005168.5"/>
    <property type="RefSeq protein sequence ID" value="NP_005159.1"/>
</dbReference>
<dbReference type="UCSC" id="uc002txe.4">
    <property type="organism name" value="human"/>
</dbReference>
<dbReference type="AGR" id="HGNC:671"/>
<dbReference type="CTD" id="390"/>
<dbReference type="DisGeNET" id="390"/>
<dbReference type="GeneCards" id="RND3"/>
<dbReference type="HGNC" id="HGNC:671">
    <property type="gene designation" value="RND3"/>
</dbReference>
<dbReference type="HPA" id="ENSG00000115963">
    <property type="expression patterns" value="Tissue enhanced (esophagus)"/>
</dbReference>
<dbReference type="MIM" id="602924">
    <property type="type" value="gene"/>
</dbReference>
<dbReference type="neXtProt" id="NX_P61587"/>
<dbReference type="OpenTargets" id="ENSG00000115963"/>
<dbReference type="PharmGKB" id="PA24953"/>
<dbReference type="VEuPathDB" id="HostDB:ENSG00000115963"/>
<dbReference type="eggNOG" id="KOG0393">
    <property type="taxonomic scope" value="Eukaryota"/>
</dbReference>
<dbReference type="GeneTree" id="ENSGT00940000157541"/>
<dbReference type="HOGENOM" id="CLU_041217_21_1_1"/>
<dbReference type="InParanoid" id="P61587"/>
<dbReference type="OMA" id="RPCQKSS"/>
<dbReference type="OrthoDB" id="8830751at2759"/>
<dbReference type="PAN-GO" id="P61587">
    <property type="GO annotations" value="14 GO annotations based on evolutionary models"/>
</dbReference>
<dbReference type="PhylomeDB" id="P61587"/>
<dbReference type="TreeFam" id="TF330887"/>
<dbReference type="PathwayCommons" id="P61587"/>
<dbReference type="Reactome" id="R-HSA-9696264">
    <property type="pathway name" value="RND3 GTPase cycle"/>
</dbReference>
<dbReference type="SignaLink" id="P61587"/>
<dbReference type="SIGNOR" id="P61587"/>
<dbReference type="BioGRID-ORCS" id="390">
    <property type="hits" value="19 hits in 1150 CRISPR screens"/>
</dbReference>
<dbReference type="ChiTaRS" id="RND3">
    <property type="organism name" value="human"/>
</dbReference>
<dbReference type="EvolutionaryTrace" id="P61587"/>
<dbReference type="GeneWiki" id="Rnd3"/>
<dbReference type="GenomeRNAi" id="390"/>
<dbReference type="Pharos" id="P61587">
    <property type="development level" value="Tbio"/>
</dbReference>
<dbReference type="PRO" id="PR:P61587"/>
<dbReference type="Proteomes" id="UP000005640">
    <property type="component" value="Chromosome 2"/>
</dbReference>
<dbReference type="RNAct" id="P61587">
    <property type="molecule type" value="protein"/>
</dbReference>
<dbReference type="Bgee" id="ENSG00000115963">
    <property type="expression patterns" value="Expressed in amniotic fluid and 200 other cell types or tissues"/>
</dbReference>
<dbReference type="ExpressionAtlas" id="P61587">
    <property type="expression patterns" value="baseline and differential"/>
</dbReference>
<dbReference type="GO" id="GO:0005829">
    <property type="term" value="C:cytosol"/>
    <property type="evidence" value="ECO:0000318"/>
    <property type="project" value="GO_Central"/>
</dbReference>
<dbReference type="GO" id="GO:0005925">
    <property type="term" value="C:focal adhesion"/>
    <property type="evidence" value="ECO:0007005"/>
    <property type="project" value="UniProtKB"/>
</dbReference>
<dbReference type="GO" id="GO:0000139">
    <property type="term" value="C:Golgi membrane"/>
    <property type="evidence" value="ECO:0007669"/>
    <property type="project" value="UniProtKB-SubCell"/>
</dbReference>
<dbReference type="GO" id="GO:0005886">
    <property type="term" value="C:plasma membrane"/>
    <property type="evidence" value="ECO:0000318"/>
    <property type="project" value="GO_Central"/>
</dbReference>
<dbReference type="GO" id="GO:0005525">
    <property type="term" value="F:GTP binding"/>
    <property type="evidence" value="ECO:0000318"/>
    <property type="project" value="GO_Central"/>
</dbReference>
<dbReference type="GO" id="GO:0003924">
    <property type="term" value="F:GTPase activity"/>
    <property type="evidence" value="ECO:0000318"/>
    <property type="project" value="GO_Central"/>
</dbReference>
<dbReference type="GO" id="GO:0019901">
    <property type="term" value="F:protein kinase binding"/>
    <property type="evidence" value="ECO:0000318"/>
    <property type="project" value="GO_Central"/>
</dbReference>
<dbReference type="GO" id="GO:0030036">
    <property type="term" value="P:actin cytoskeleton organization"/>
    <property type="evidence" value="ECO:0000304"/>
    <property type="project" value="ProtInc"/>
</dbReference>
<dbReference type="GO" id="GO:0007015">
    <property type="term" value="P:actin filament organization"/>
    <property type="evidence" value="ECO:0000318"/>
    <property type="project" value="GO_Central"/>
</dbReference>
<dbReference type="GO" id="GO:0007155">
    <property type="term" value="P:cell adhesion"/>
    <property type="evidence" value="ECO:0000304"/>
    <property type="project" value="ProtInc"/>
</dbReference>
<dbReference type="GO" id="GO:0032956">
    <property type="term" value="P:regulation of actin cytoskeleton organization"/>
    <property type="evidence" value="ECO:0000318"/>
    <property type="project" value="GO_Central"/>
</dbReference>
<dbReference type="GO" id="GO:0007165">
    <property type="term" value="P:signal transduction"/>
    <property type="evidence" value="ECO:0000318"/>
    <property type="project" value="GO_Central"/>
</dbReference>
<dbReference type="GO" id="GO:0007264">
    <property type="term" value="P:small GTPase-mediated signal transduction"/>
    <property type="evidence" value="ECO:0007669"/>
    <property type="project" value="InterPro"/>
</dbReference>
<dbReference type="CDD" id="cd04172">
    <property type="entry name" value="Rnd3_RhoE_Rho8"/>
    <property type="match status" value="1"/>
</dbReference>
<dbReference type="DisProt" id="DP02804"/>
<dbReference type="FunFam" id="3.40.50.300:FF:000407">
    <property type="entry name" value="Rho-related GTP-binding protein RhoE"/>
    <property type="match status" value="1"/>
</dbReference>
<dbReference type="Gene3D" id="3.40.50.300">
    <property type="entry name" value="P-loop containing nucleotide triphosphate hydrolases"/>
    <property type="match status" value="1"/>
</dbReference>
<dbReference type="InterPro" id="IPR027417">
    <property type="entry name" value="P-loop_NTPase"/>
</dbReference>
<dbReference type="InterPro" id="IPR041843">
    <property type="entry name" value="RhoE"/>
</dbReference>
<dbReference type="InterPro" id="IPR005225">
    <property type="entry name" value="Small_GTP-bd"/>
</dbReference>
<dbReference type="InterPro" id="IPR001806">
    <property type="entry name" value="Small_GTPase"/>
</dbReference>
<dbReference type="InterPro" id="IPR003578">
    <property type="entry name" value="Small_GTPase_Rho"/>
</dbReference>
<dbReference type="NCBIfam" id="TIGR00231">
    <property type="entry name" value="small_GTP"/>
    <property type="match status" value="1"/>
</dbReference>
<dbReference type="PANTHER" id="PTHR24072">
    <property type="entry name" value="RHO FAMILY GTPASE"/>
    <property type="match status" value="1"/>
</dbReference>
<dbReference type="Pfam" id="PF00071">
    <property type="entry name" value="Ras"/>
    <property type="match status" value="1"/>
</dbReference>
<dbReference type="PRINTS" id="PR00449">
    <property type="entry name" value="RASTRNSFRMNG"/>
</dbReference>
<dbReference type="SMART" id="SM00175">
    <property type="entry name" value="RAB"/>
    <property type="match status" value="1"/>
</dbReference>
<dbReference type="SMART" id="SM00173">
    <property type="entry name" value="RAS"/>
    <property type="match status" value="1"/>
</dbReference>
<dbReference type="SMART" id="SM00174">
    <property type="entry name" value="RHO"/>
    <property type="match status" value="1"/>
</dbReference>
<dbReference type="SUPFAM" id="SSF52540">
    <property type="entry name" value="P-loop containing nucleoside triphosphate hydrolases"/>
    <property type="match status" value="1"/>
</dbReference>
<dbReference type="PROSITE" id="PS51420">
    <property type="entry name" value="RHO"/>
    <property type="match status" value="1"/>
</dbReference>
<reference key="1">
    <citation type="journal article" date="1998" name="J. Cell Biol.">
        <title>A new member of the Rho family, Rnd1, promotes disassembly of actin filament structures and loss of cell adhesion.</title>
        <authorList>
            <person name="Nobes C.D."/>
            <person name="Lauritzen I."/>
            <person name="Mattei M.-G."/>
            <person name="Paris S."/>
            <person name="Hall A."/>
            <person name="Chardin P."/>
        </authorList>
    </citation>
    <scope>NUCLEOTIDE SEQUENCE [MRNA]</scope>
    <source>
        <tissue>Spleen</tissue>
    </source>
</reference>
<reference key="2">
    <citation type="submission" date="2004-09" db="EMBL/GenBank/DDBJ databases">
        <title>memB, a progression marker of human melanoma cell lines, encodes a member of a rho-related family.</title>
        <authorList>
            <person name="van Groningen J.J.M."/>
            <person name="Van Rijk A.A.F."/>
            <person name="Bloemers H.P.J."/>
            <person name="Swart G.W.M."/>
        </authorList>
    </citation>
    <scope>NUCLEOTIDE SEQUENCE [MRNA]</scope>
</reference>
<reference key="3">
    <citation type="submission" date="2002-04" db="EMBL/GenBank/DDBJ databases">
        <title>cDNA clones of human proteins involved in signal transduction sequenced by the Guthrie cDNA resource center (www.cdna.org).</title>
        <authorList>
            <person name="Puhl H.L. III"/>
            <person name="Ikeda S.R."/>
            <person name="Aronstam R.S."/>
        </authorList>
    </citation>
    <scope>NUCLEOTIDE SEQUENCE [LARGE SCALE MRNA]</scope>
    <source>
        <tissue>Placenta</tissue>
    </source>
</reference>
<reference key="4">
    <citation type="submission" date="2003-05" db="EMBL/GenBank/DDBJ databases">
        <title>Cloning of human full-length CDSs in BD Creator(TM) system donor vector.</title>
        <authorList>
            <person name="Kalnine N."/>
            <person name="Chen X."/>
            <person name="Rolfs A."/>
            <person name="Halleck A."/>
            <person name="Hines L."/>
            <person name="Eisenstein S."/>
            <person name="Koundinya M."/>
            <person name="Raphael J."/>
            <person name="Moreira D."/>
            <person name="Kelley T."/>
            <person name="LaBaer J."/>
            <person name="Lin Y."/>
            <person name="Phelan M."/>
            <person name="Farmer A."/>
        </authorList>
    </citation>
    <scope>NUCLEOTIDE SEQUENCE [LARGE SCALE MRNA]</scope>
</reference>
<reference key="5">
    <citation type="submission" date="2005-09" db="EMBL/GenBank/DDBJ databases">
        <authorList>
            <person name="Mural R.J."/>
            <person name="Istrail S."/>
            <person name="Sutton G.G."/>
            <person name="Florea L."/>
            <person name="Halpern A.L."/>
            <person name="Mobarry C.M."/>
            <person name="Lippert R."/>
            <person name="Walenz B."/>
            <person name="Shatkay H."/>
            <person name="Dew I."/>
            <person name="Miller J.R."/>
            <person name="Flanigan M.J."/>
            <person name="Edwards N.J."/>
            <person name="Bolanos R."/>
            <person name="Fasulo D."/>
            <person name="Halldorsson B.V."/>
            <person name="Hannenhalli S."/>
            <person name="Turner R."/>
            <person name="Yooseph S."/>
            <person name="Lu F."/>
            <person name="Nusskern D.R."/>
            <person name="Shue B.C."/>
            <person name="Zheng X.H."/>
            <person name="Zhong F."/>
            <person name="Delcher A.L."/>
            <person name="Huson D.H."/>
            <person name="Kravitz S.A."/>
            <person name="Mouchard L."/>
            <person name="Reinert K."/>
            <person name="Remington K.A."/>
            <person name="Clark A.G."/>
            <person name="Waterman M.S."/>
            <person name="Eichler E.E."/>
            <person name="Adams M.D."/>
            <person name="Hunkapiller M.W."/>
            <person name="Myers E.W."/>
            <person name="Venter J.C."/>
        </authorList>
    </citation>
    <scope>NUCLEOTIDE SEQUENCE [LARGE SCALE GENOMIC DNA]</scope>
</reference>
<reference key="6">
    <citation type="journal article" date="2004" name="Genome Res.">
        <title>The status, quality, and expansion of the NIH full-length cDNA project: the Mammalian Gene Collection (MGC).</title>
        <authorList>
            <consortium name="The MGC Project Team"/>
        </authorList>
    </citation>
    <scope>NUCLEOTIDE SEQUENCE [LARGE SCALE MRNA]</scope>
    <source>
        <tissue>Kidney</tissue>
    </source>
</reference>
<reference key="7">
    <citation type="journal article" date="1996" name="Mol. Cell. Biol.">
        <title>Identification of a novel human Rho protein with unusual properties: GTPase deficiency and in vivo farnesylation.</title>
        <authorList>
            <person name="Foster R."/>
            <person name="Hu K.-Q."/>
            <person name="Lu Y."/>
            <person name="Nolan K.M."/>
            <person name="Thissen J."/>
            <person name="Settleman J."/>
        </authorList>
    </citation>
    <scope>NUCLEOTIDE SEQUENCE [MRNA] OF 16-244</scope>
    <scope>CHARACTERIZATION</scope>
    <scope>ISOPRENYLATION AT CYS-241</scope>
    <source>
        <tissue>Fetal brain</tissue>
    </source>
</reference>
<reference key="8">
    <citation type="journal article" date="2002" name="Mol. Cell. Biol.">
        <title>Socius is a novel Rnd GTPase-interacting protein involved in disassembly of actin stress fibers.</title>
        <authorList>
            <person name="Katoh H."/>
            <person name="Harada A."/>
            <person name="Mori K."/>
            <person name="Negishi M."/>
        </authorList>
    </citation>
    <scope>INTERACTION WITH UBXD5</scope>
</reference>
<reference key="9">
    <citation type="journal article" date="2002" name="FEBS Lett.">
        <title>Crystal structure of Rnd3/RhoE: functional implications.</title>
        <authorList>
            <person name="Fiegen D."/>
            <person name="Blumenstein L."/>
            <person name="Stege P."/>
            <person name="Vetter I.R."/>
            <person name="Ahmadian M.R."/>
        </authorList>
    </citation>
    <scope>X-RAY CRYSTALLOGRAPHY (2.0 ANGSTROMS) OF 21-200 IN COMPLEX WITH GTP</scope>
</reference>
<feature type="chain" id="PRO_0000198878" description="Rho-related GTP-binding protein RhoE">
    <location>
        <begin position="1"/>
        <end position="241"/>
    </location>
</feature>
<feature type="propeptide" id="PRO_0000281230" description="Removed in mature form" evidence="1">
    <location>
        <begin position="242"/>
        <end position="244"/>
    </location>
</feature>
<feature type="short sequence motif" description="Effector region" evidence="2">
    <location>
        <begin position="52"/>
        <end position="60"/>
    </location>
</feature>
<feature type="binding site" evidence="1">
    <location>
        <begin position="30"/>
        <end position="37"/>
    </location>
    <ligand>
        <name>GTP</name>
        <dbReference type="ChEBI" id="CHEBI:37565"/>
    </ligand>
</feature>
<feature type="binding site" evidence="1">
    <location>
        <begin position="77"/>
        <end position="81"/>
    </location>
    <ligand>
        <name>GTP</name>
        <dbReference type="ChEBI" id="CHEBI:37565"/>
    </ligand>
</feature>
<feature type="binding site" evidence="1">
    <location>
        <begin position="135"/>
        <end position="138"/>
    </location>
    <ligand>
        <name>GTP</name>
        <dbReference type="ChEBI" id="CHEBI:37565"/>
    </ligand>
</feature>
<feature type="modified residue" description="Cysteine methyl ester" evidence="1">
    <location>
        <position position="241"/>
    </location>
</feature>
<feature type="lipid moiety-binding region" description="S-farnesyl cysteine" evidence="5">
    <location>
        <position position="241"/>
    </location>
</feature>
<feature type="strand" evidence="7">
    <location>
        <begin position="23"/>
        <end position="31"/>
    </location>
</feature>
<feature type="helix" evidence="7">
    <location>
        <begin position="36"/>
        <end position="45"/>
    </location>
</feature>
<feature type="strand" evidence="7">
    <location>
        <begin position="56"/>
        <end position="65"/>
    </location>
</feature>
<feature type="strand" evidence="7">
    <location>
        <begin position="70"/>
        <end position="78"/>
    </location>
</feature>
<feature type="helix" evidence="7">
    <location>
        <begin position="82"/>
        <end position="84"/>
    </location>
</feature>
<feature type="turn" evidence="7">
    <location>
        <begin position="85"/>
        <end position="87"/>
    </location>
</feature>
<feature type="helix" evidence="7">
    <location>
        <begin position="88"/>
        <end position="91"/>
    </location>
</feature>
<feature type="strand" evidence="7">
    <location>
        <begin position="96"/>
        <end position="103"/>
    </location>
</feature>
<feature type="helix" evidence="7">
    <location>
        <begin position="107"/>
        <end position="115"/>
    </location>
</feature>
<feature type="helix" evidence="7">
    <location>
        <begin position="117"/>
        <end position="124"/>
    </location>
</feature>
<feature type="strand" evidence="7">
    <location>
        <begin position="129"/>
        <end position="135"/>
    </location>
</feature>
<feature type="helix" evidence="7">
    <location>
        <begin position="137"/>
        <end position="141"/>
    </location>
</feature>
<feature type="helix" evidence="7">
    <location>
        <begin position="143"/>
        <end position="150"/>
    </location>
</feature>
<feature type="turn" evidence="7">
    <location>
        <begin position="151"/>
        <end position="153"/>
    </location>
</feature>
<feature type="helix" evidence="7">
    <location>
        <begin position="159"/>
        <end position="169"/>
    </location>
</feature>
<feature type="strand" evidence="7">
    <location>
        <begin position="172"/>
        <end position="176"/>
    </location>
</feature>
<feature type="turn" evidence="7">
    <location>
        <begin position="179"/>
        <end position="181"/>
    </location>
</feature>
<feature type="helix" evidence="7">
    <location>
        <begin position="183"/>
        <end position="198"/>
    </location>
</feature>
<accession>P61587</accession>
<accession>D3DP95</accession>
<accession>P52199</accession>
<evidence type="ECO:0000250" key="1"/>
<evidence type="ECO:0000255" key="2"/>
<evidence type="ECO:0000269" key="3">
    <source>
    </source>
</evidence>
<evidence type="ECO:0000269" key="4">
    <source>
    </source>
</evidence>
<evidence type="ECO:0000269" key="5">
    <source>
    </source>
</evidence>
<evidence type="ECO:0000305" key="6"/>
<evidence type="ECO:0007829" key="7">
    <source>
        <dbReference type="PDB" id="1M7B"/>
    </source>
</evidence>